<reference key="1">
    <citation type="journal article" date="2017" name="ChemBioChem">
        <title>Biosynthetic machinery of diterpene pleuromutilin isolated from basidiomycete fungi.</title>
        <authorList>
            <person name="Yamane M."/>
            <person name="Minami A."/>
            <person name="Liu C."/>
            <person name="Ozaki T."/>
            <person name="Takeuchi I."/>
            <person name="Tsukagoshi T."/>
            <person name="Tokiwano T."/>
            <person name="Gomi K."/>
            <person name="Oikawa H."/>
        </authorList>
    </citation>
    <scope>NUCLEOTIDE SEQUENCE [GENOMIC DNA]</scope>
    <scope>FUNCTION</scope>
    <scope>CATALYTIC ACTIVITY</scope>
    <scope>PATHWAY</scope>
    <source>
        <strain>ATCC 20527</strain>
    </source>
</reference>
<protein>
    <recommendedName>
        <fullName evidence="8">Short chain dehydrogenase ple7</fullName>
        <ecNumber evidence="7">1.1.1.-</ecNumber>
    </recommendedName>
    <alternativeName>
        <fullName evidence="8">Pleuromutilin biosynthesis cluster protein 7</fullName>
    </alternativeName>
</protein>
<organism>
    <name type="scientific">Rhodocybe pseudopiperita</name>
    <name type="common">Clitopilus pseudopiperitus</name>
    <dbReference type="NCBI Taxonomy" id="693819"/>
    <lineage>
        <taxon>Eukaryota</taxon>
        <taxon>Fungi</taxon>
        <taxon>Dikarya</taxon>
        <taxon>Basidiomycota</taxon>
        <taxon>Agaricomycotina</taxon>
        <taxon>Agaricomycetes</taxon>
        <taxon>Agaricomycetidae</taxon>
        <taxon>Agaricales</taxon>
        <taxon>Tricholomatineae</taxon>
        <taxon>Entolomataceae</taxon>
        <taxon>Rhodocybe</taxon>
    </lineage>
</organism>
<sequence>MEGKIVIVTGASHGIGLATVNLLLAAGASVFGVDLAPTPPSVTSEKFKFLQLNICDKDAPAKIVLGSKDAFGSDRIDALLNVAGISDYFQTALTFEDDVWDSVIDVNLAAQVRLMREVLKVMKVQKSGSIVNVVSKLALSGACGGVAYVASKHALLGVTKNTAWMFKDDGIRCNAVAPGSTDTNIRNTTDATKIDYDAFTRAMPVIGVHCNLQTGEGMMSPEPAAQAIFFLASDLSKGMNGVVIPVDNAWSVI</sequence>
<accession>A0A6S6QNE4</accession>
<dbReference type="EC" id="1.1.1.-" evidence="7"/>
<dbReference type="EMBL" id="LC314149">
    <property type="protein sequence ID" value="BCI98775.1"/>
    <property type="molecule type" value="Genomic_DNA"/>
</dbReference>
<dbReference type="SMR" id="A0A6S6QNE4"/>
<dbReference type="GlyCosmos" id="A0A6S6QNE4">
    <property type="glycosylation" value="1 site, No reported glycans"/>
</dbReference>
<dbReference type="UniPathway" id="UPA00213"/>
<dbReference type="GO" id="GO:0016020">
    <property type="term" value="C:membrane"/>
    <property type="evidence" value="ECO:0007669"/>
    <property type="project" value="UniProtKB-SubCell"/>
</dbReference>
<dbReference type="GO" id="GO:0016491">
    <property type="term" value="F:oxidoreductase activity"/>
    <property type="evidence" value="ECO:0007669"/>
    <property type="project" value="UniProtKB-KW"/>
</dbReference>
<dbReference type="GO" id="GO:0016114">
    <property type="term" value="P:terpenoid biosynthetic process"/>
    <property type="evidence" value="ECO:0007669"/>
    <property type="project" value="UniProtKB-UniPathway"/>
</dbReference>
<dbReference type="CDD" id="cd05233">
    <property type="entry name" value="SDR_c"/>
    <property type="match status" value="1"/>
</dbReference>
<dbReference type="Gene3D" id="3.40.50.720">
    <property type="entry name" value="NAD(P)-binding Rossmann-like Domain"/>
    <property type="match status" value="1"/>
</dbReference>
<dbReference type="InterPro" id="IPR036291">
    <property type="entry name" value="NAD(P)-bd_dom_sf"/>
</dbReference>
<dbReference type="InterPro" id="IPR020904">
    <property type="entry name" value="Sc_DH/Rdtase_CS"/>
</dbReference>
<dbReference type="InterPro" id="IPR002347">
    <property type="entry name" value="SDR_fam"/>
</dbReference>
<dbReference type="PANTHER" id="PTHR24321">
    <property type="entry name" value="DEHYDROGENASES, SHORT CHAIN"/>
    <property type="match status" value="1"/>
</dbReference>
<dbReference type="PANTHER" id="PTHR24321:SF8">
    <property type="entry name" value="ESTRADIOL 17-BETA-DEHYDROGENASE 8-RELATED"/>
    <property type="match status" value="1"/>
</dbReference>
<dbReference type="Pfam" id="PF00106">
    <property type="entry name" value="adh_short"/>
    <property type="match status" value="1"/>
</dbReference>
<dbReference type="PRINTS" id="PR00081">
    <property type="entry name" value="GDHRDH"/>
</dbReference>
<dbReference type="PRINTS" id="PR00080">
    <property type="entry name" value="SDRFAMILY"/>
</dbReference>
<dbReference type="SUPFAM" id="SSF51735">
    <property type="entry name" value="NAD(P)-binding Rossmann-fold domains"/>
    <property type="match status" value="1"/>
</dbReference>
<dbReference type="PROSITE" id="PS00061">
    <property type="entry name" value="ADH_SHORT"/>
    <property type="match status" value="1"/>
</dbReference>
<evidence type="ECO:0000250" key="1">
    <source>
        <dbReference type="UniProtKB" id="A0A2L0VXR0"/>
    </source>
</evidence>
<evidence type="ECO:0000250" key="2">
    <source>
        <dbReference type="UniProtKB" id="L0E2Z4"/>
    </source>
</evidence>
<evidence type="ECO:0000250" key="3">
    <source>
        <dbReference type="UniProtKB" id="O93868"/>
    </source>
</evidence>
<evidence type="ECO:0000255" key="4"/>
<evidence type="ECO:0000255" key="5">
    <source>
        <dbReference type="PROSITE-ProRule" id="PRU00498"/>
    </source>
</evidence>
<evidence type="ECO:0000255" key="6">
    <source>
        <dbReference type="PROSITE-ProRule" id="PRU10001"/>
    </source>
</evidence>
<evidence type="ECO:0000269" key="7">
    <source ref="1"/>
</evidence>
<evidence type="ECO:0000303" key="8">
    <source ref="1"/>
</evidence>
<evidence type="ECO:0000305" key="9"/>
<feature type="chain" id="PRO_0000453728" description="Short chain dehydrogenase ple7">
    <location>
        <begin position="1"/>
        <end position="253"/>
    </location>
</feature>
<feature type="transmembrane region" description="Helical" evidence="4">
    <location>
        <begin position="5"/>
        <end position="25"/>
    </location>
</feature>
<feature type="active site" description="Proton acceptor" evidence="6">
    <location>
        <position position="148"/>
    </location>
</feature>
<feature type="active site" description="Lowers pKa of active site Tyr" evidence="3">
    <location>
        <position position="152"/>
    </location>
</feature>
<feature type="binding site" evidence="2">
    <location>
        <position position="8"/>
    </location>
    <ligand>
        <name>NADP(+)</name>
        <dbReference type="ChEBI" id="CHEBI:58349"/>
    </ligand>
</feature>
<feature type="binding site" evidence="2">
    <location>
        <position position="116"/>
    </location>
    <ligand>
        <name>NADP(+)</name>
        <dbReference type="ChEBI" id="CHEBI:58349"/>
    </ligand>
</feature>
<feature type="binding site" evidence="3">
    <location>
        <position position="148"/>
    </location>
    <ligand>
        <name>NADP(+)</name>
        <dbReference type="ChEBI" id="CHEBI:58349"/>
    </ligand>
</feature>
<feature type="binding site" evidence="3">
    <location>
        <position position="152"/>
    </location>
    <ligand>
        <name>NADP(+)</name>
        <dbReference type="ChEBI" id="CHEBI:58349"/>
    </ligand>
</feature>
<feature type="binding site" evidence="3">
    <location>
        <position position="184"/>
    </location>
    <ligand>
        <name>NADP(+)</name>
        <dbReference type="ChEBI" id="CHEBI:58349"/>
    </ligand>
</feature>
<feature type="glycosylation site" description="N-linked (GlcNAc...) asparagine" evidence="5">
    <location>
        <position position="187"/>
    </location>
</feature>
<name>PLE7_RHOPP</name>
<gene>
    <name evidence="8" type="primary">ple7</name>
</gene>
<keyword id="KW-0325">Glycoprotein</keyword>
<keyword id="KW-0472">Membrane</keyword>
<keyword id="KW-0521">NADP</keyword>
<keyword id="KW-0560">Oxidoreductase</keyword>
<keyword id="KW-0812">Transmembrane</keyword>
<keyword id="KW-1133">Transmembrane helix</keyword>
<proteinExistence type="evidence at protein level"/>
<comment type="function">
    <text evidence="1 7">Short chain dehydrogenase; part of the gene cluster that mediates the biosynthesis of pleuromutilin, a tricyclic diterpene showing antibacterial properties (Ref.1). The geranylgeranyl diphosphate (GGPP) synthase ple4 catalyzes the first step in pleuromutilin biosynthesis (Ref.1). GGPP is then substrate of the premutilin synthase (PS) ple3 to yield premutilin (Ref.1). Premutilin synthase is a bifunctional enzyme composed of the fusion of a class II diterpene cyclase (DTC) and a class I diterpene synthase (DTS), with the corresponding domains and active sites containing characteristic aspartate-rich motifs (By similarity). GGPP is first converted to mutildienyl-diphosphate (MPP) at the class II DTC site (By similarity). MPP is subsequently further cyclized at the class I DTS site, followed by a 1,5-hydride shift and addition of water prior to terminating deprotonation, to yield premutilin (By similarity). The cytochrome P450 monooxygenases ple5 and ple6 hydroxylate premutilin at C-11 and C-3, respectively, producing 11-hydroxypremutilin and 3-hydroxypremutilin (Ref.1). The combination of the actions of both ple5 and ple6 leads to the production of 3,11-dihydroxypremutilin (Ref.1). The short chain dehydrogenase ple7 further converts 3,11-dihydroxypremutilin into mutilin (Ref.1). The acetyltransferase ple2 then acetylates mutilin to produce 14-O-acetylmutilin (Ref.1). Finally, the cytochrome P450 monooxygenase ple1 catalyzes hydroxylation on the alpha position of the acetyl side chain of 14-O-acetylmutilin to yield pleuromutilin (Ref.1).</text>
</comment>
<comment type="pathway">
    <text evidence="7">Secondary metabolite biosynthesis; terpenoid biosynthesis.</text>
</comment>
<comment type="subcellular location">
    <subcellularLocation>
        <location evidence="4">Membrane</location>
        <topology evidence="4">Single-pass membrane protein</topology>
    </subcellularLocation>
</comment>
<comment type="similarity">
    <text evidence="9">Belongs to the short-chain dehydrogenases/reductases (SDR) family.</text>
</comment>